<evidence type="ECO:0000255" key="1">
    <source>
        <dbReference type="HAMAP-Rule" id="MF_01081"/>
    </source>
</evidence>
<proteinExistence type="inferred from homology"/>
<name>TRUB_THEON</name>
<gene>
    <name evidence="1" type="primary">truB</name>
    <name type="ordered locus">TON_0096</name>
</gene>
<keyword id="KW-0413">Isomerase</keyword>
<keyword id="KW-0819">tRNA processing</keyword>
<protein>
    <recommendedName>
        <fullName evidence="1">Probable tRNA pseudouridine synthase B</fullName>
        <ecNumber evidence="1">5.4.99.25</ecNumber>
    </recommendedName>
    <alternativeName>
        <fullName evidence="1">tRNA pseudouridine(55) synthase</fullName>
        <shortName evidence="1">Psi55 synthase</shortName>
    </alternativeName>
    <alternativeName>
        <fullName evidence="1">tRNA pseudouridylate synthase</fullName>
    </alternativeName>
    <alternativeName>
        <fullName evidence="1">tRNA-uridine isomerase</fullName>
    </alternativeName>
</protein>
<dbReference type="EC" id="5.4.99.25" evidence="1"/>
<dbReference type="EMBL" id="CP000855">
    <property type="protein sequence ID" value="ACJ15581.1"/>
    <property type="molecule type" value="Genomic_DNA"/>
</dbReference>
<dbReference type="RefSeq" id="WP_012571054.1">
    <property type="nucleotide sequence ID" value="NC_011529.1"/>
</dbReference>
<dbReference type="SMR" id="B6YSP4"/>
<dbReference type="STRING" id="523850.TON_0096"/>
<dbReference type="GeneID" id="7017743"/>
<dbReference type="KEGG" id="ton:TON_0096"/>
<dbReference type="PATRIC" id="fig|523850.10.peg.96"/>
<dbReference type="eggNOG" id="arCOG00987">
    <property type="taxonomic scope" value="Archaea"/>
</dbReference>
<dbReference type="HOGENOM" id="CLU_032087_3_0_2"/>
<dbReference type="OrthoDB" id="35866at2157"/>
<dbReference type="Proteomes" id="UP000002727">
    <property type="component" value="Chromosome"/>
</dbReference>
<dbReference type="GO" id="GO:0003723">
    <property type="term" value="F:RNA binding"/>
    <property type="evidence" value="ECO:0007669"/>
    <property type="project" value="InterPro"/>
</dbReference>
<dbReference type="GO" id="GO:0160148">
    <property type="term" value="F:tRNA pseudouridine(55) synthase activity"/>
    <property type="evidence" value="ECO:0007669"/>
    <property type="project" value="UniProtKB-EC"/>
</dbReference>
<dbReference type="GO" id="GO:0000495">
    <property type="term" value="P:box H/ACA sno(s)RNA 3'-end processing"/>
    <property type="evidence" value="ECO:0007669"/>
    <property type="project" value="TreeGrafter"/>
</dbReference>
<dbReference type="GO" id="GO:1990481">
    <property type="term" value="P:mRNA pseudouridine synthesis"/>
    <property type="evidence" value="ECO:0007669"/>
    <property type="project" value="TreeGrafter"/>
</dbReference>
<dbReference type="GO" id="GO:0031118">
    <property type="term" value="P:rRNA pseudouridine synthesis"/>
    <property type="evidence" value="ECO:0007669"/>
    <property type="project" value="TreeGrafter"/>
</dbReference>
<dbReference type="GO" id="GO:0031120">
    <property type="term" value="P:snRNA pseudouridine synthesis"/>
    <property type="evidence" value="ECO:0007669"/>
    <property type="project" value="TreeGrafter"/>
</dbReference>
<dbReference type="GO" id="GO:0031119">
    <property type="term" value="P:tRNA pseudouridine synthesis"/>
    <property type="evidence" value="ECO:0007669"/>
    <property type="project" value="UniProtKB-UniRule"/>
</dbReference>
<dbReference type="CDD" id="cd02572">
    <property type="entry name" value="PseudoU_synth_hDyskerin"/>
    <property type="match status" value="1"/>
</dbReference>
<dbReference type="CDD" id="cd21148">
    <property type="entry name" value="PUA_Cbf5"/>
    <property type="match status" value="1"/>
</dbReference>
<dbReference type="FunFam" id="3.30.2350.10:FF:000001">
    <property type="entry name" value="H/ACA ribonucleoprotein complex subunit CBF5"/>
    <property type="match status" value="1"/>
</dbReference>
<dbReference type="FunFam" id="2.30.130.10:FF:000010">
    <property type="entry name" value="Probable tRNA pseudouridine synthase B"/>
    <property type="match status" value="1"/>
</dbReference>
<dbReference type="Gene3D" id="3.30.2350.10">
    <property type="entry name" value="Pseudouridine synthase"/>
    <property type="match status" value="1"/>
</dbReference>
<dbReference type="Gene3D" id="2.30.130.10">
    <property type="entry name" value="PUA domain"/>
    <property type="match status" value="1"/>
</dbReference>
<dbReference type="HAMAP" id="MF_01081">
    <property type="entry name" value="TruB_arch"/>
    <property type="match status" value="1"/>
</dbReference>
<dbReference type="InterPro" id="IPR012960">
    <property type="entry name" value="Dyskerin-like"/>
</dbReference>
<dbReference type="InterPro" id="IPR020103">
    <property type="entry name" value="PsdUridine_synth_cat_dom_sf"/>
</dbReference>
<dbReference type="InterPro" id="IPR002501">
    <property type="entry name" value="PsdUridine_synth_N"/>
</dbReference>
<dbReference type="InterPro" id="IPR002478">
    <property type="entry name" value="PUA"/>
</dbReference>
<dbReference type="InterPro" id="IPR015947">
    <property type="entry name" value="PUA-like_sf"/>
</dbReference>
<dbReference type="InterPro" id="IPR036974">
    <property type="entry name" value="PUA_sf"/>
</dbReference>
<dbReference type="InterPro" id="IPR004802">
    <property type="entry name" value="tRNA_PsdUridine_synth_B_fam"/>
</dbReference>
<dbReference type="InterPro" id="IPR026326">
    <property type="entry name" value="TruB_arch"/>
</dbReference>
<dbReference type="InterPro" id="IPR032819">
    <property type="entry name" value="TruB_C"/>
</dbReference>
<dbReference type="InterPro" id="IPR004521">
    <property type="entry name" value="Uncharacterised_CHP00451"/>
</dbReference>
<dbReference type="NCBIfam" id="TIGR00425">
    <property type="entry name" value="CBF5"/>
    <property type="match status" value="1"/>
</dbReference>
<dbReference type="NCBIfam" id="NF003280">
    <property type="entry name" value="PRK04270.1"/>
    <property type="match status" value="1"/>
</dbReference>
<dbReference type="NCBIfam" id="TIGR00451">
    <property type="entry name" value="unchar_dom_2"/>
    <property type="match status" value="1"/>
</dbReference>
<dbReference type="PANTHER" id="PTHR23127">
    <property type="entry name" value="CENTROMERE/MICROTUBULE BINDING PROTEIN CBF5"/>
    <property type="match status" value="1"/>
</dbReference>
<dbReference type="PANTHER" id="PTHR23127:SF0">
    <property type="entry name" value="H_ACA RIBONUCLEOPROTEIN COMPLEX SUBUNIT DKC1"/>
    <property type="match status" value="1"/>
</dbReference>
<dbReference type="Pfam" id="PF08068">
    <property type="entry name" value="DKCLD"/>
    <property type="match status" value="1"/>
</dbReference>
<dbReference type="Pfam" id="PF01472">
    <property type="entry name" value="PUA"/>
    <property type="match status" value="1"/>
</dbReference>
<dbReference type="Pfam" id="PF16198">
    <property type="entry name" value="TruB_C_2"/>
    <property type="match status" value="1"/>
</dbReference>
<dbReference type="Pfam" id="PF01509">
    <property type="entry name" value="TruB_N"/>
    <property type="match status" value="1"/>
</dbReference>
<dbReference type="SMART" id="SM01136">
    <property type="entry name" value="DKCLD"/>
    <property type="match status" value="1"/>
</dbReference>
<dbReference type="SMART" id="SM00359">
    <property type="entry name" value="PUA"/>
    <property type="match status" value="1"/>
</dbReference>
<dbReference type="SUPFAM" id="SSF55120">
    <property type="entry name" value="Pseudouridine synthase"/>
    <property type="match status" value="1"/>
</dbReference>
<dbReference type="SUPFAM" id="SSF88697">
    <property type="entry name" value="PUA domain-like"/>
    <property type="match status" value="1"/>
</dbReference>
<dbReference type="PROSITE" id="PS50890">
    <property type="entry name" value="PUA"/>
    <property type="match status" value="1"/>
</dbReference>
<feature type="chain" id="PRO_1000136826" description="Probable tRNA pseudouridine synthase B">
    <location>
        <begin position="1"/>
        <end position="334"/>
    </location>
</feature>
<feature type="domain" description="PUA" evidence="1">
    <location>
        <begin position="250"/>
        <end position="325"/>
    </location>
</feature>
<feature type="active site" description="Nucleophile" evidence="1">
    <location>
        <position position="82"/>
    </location>
</feature>
<comment type="function">
    <text evidence="1">Could be responsible for synthesis of pseudouridine from uracil-55 in the psi GC loop of transfer RNAs.</text>
</comment>
<comment type="catalytic activity">
    <reaction evidence="1">
        <text>uridine(55) in tRNA = pseudouridine(55) in tRNA</text>
        <dbReference type="Rhea" id="RHEA:42532"/>
        <dbReference type="Rhea" id="RHEA-COMP:10101"/>
        <dbReference type="Rhea" id="RHEA-COMP:10102"/>
        <dbReference type="ChEBI" id="CHEBI:65314"/>
        <dbReference type="ChEBI" id="CHEBI:65315"/>
        <dbReference type="EC" id="5.4.99.25"/>
    </reaction>
</comment>
<comment type="similarity">
    <text evidence="1">Belongs to the pseudouridine synthase TruB family. Type 2 subfamily.</text>
</comment>
<organism>
    <name type="scientific">Thermococcus onnurineus (strain NA1)</name>
    <dbReference type="NCBI Taxonomy" id="523850"/>
    <lineage>
        <taxon>Archaea</taxon>
        <taxon>Methanobacteriati</taxon>
        <taxon>Methanobacteriota</taxon>
        <taxon>Thermococci</taxon>
        <taxon>Thermococcales</taxon>
        <taxon>Thermococcaceae</taxon>
        <taxon>Thermococcus</taxon>
    </lineage>
</organism>
<reference key="1">
    <citation type="journal article" date="2008" name="J. Bacteriol.">
        <title>The complete genome sequence of Thermococcus onnurineus NA1 reveals a mixed heterotrophic and carboxydotrophic metabolism.</title>
        <authorList>
            <person name="Lee H.S."/>
            <person name="Kang S.G."/>
            <person name="Bae S.S."/>
            <person name="Lim J.K."/>
            <person name="Cho Y."/>
            <person name="Kim Y.J."/>
            <person name="Jeon J.H."/>
            <person name="Cha S.-S."/>
            <person name="Kwon K.K."/>
            <person name="Kim H.-T."/>
            <person name="Park C.-J."/>
            <person name="Lee H.-W."/>
            <person name="Kim S.I."/>
            <person name="Chun J."/>
            <person name="Colwell R.R."/>
            <person name="Kim S.-J."/>
            <person name="Lee J.-H."/>
        </authorList>
    </citation>
    <scope>NUCLEOTIDE SEQUENCE [LARGE SCALE GENOMIC DNA]</scope>
    <source>
        <strain>NA1</strain>
    </source>
</reference>
<accession>B6YSP4</accession>
<sequence length="334" mass="37749">MARDEVRRILPADIKREVLIKDEKAETNPKWGFPPEKRPMEMHMQFGIINLDKPPGPTSHEVVAWVKKLFNLNKAGHGGTLDPKVSGVLPVALERATRVVQALLPAGKEYVALMHLHGEVPEDKIYAVMKEFEGEIIQRPPLRSAVKRRLRTRKVYYIEILEIDGKDVLFRVGVEAGTYIRSLIHHIGLALGVGAHMAELRRTRSGPFKEDETLVTLHDLVDYYHFWKEDGIEEYFRKAIQPMEKAVEHLPKVWIRDSAVAAVTHGADLAVPGIVKVHKGIKKGDLVAVMTLKDELVALGKATMTSGEMLQKSKGIAVDVDKVFMPRDWYPKLW</sequence>